<keyword id="KW-0024">Alternative initiation</keyword>
<keyword id="KW-1015">Disulfide bond</keyword>
<keyword id="KW-0325">Glycoprotein</keyword>
<keyword id="KW-1032">Host cell membrane</keyword>
<keyword id="KW-1040">Host Golgi apparatus</keyword>
<keyword id="KW-1043">Host membrane</keyword>
<keyword id="KW-0945">Host-virus interaction</keyword>
<keyword id="KW-1080">Inhibition of host adaptive immune response by virus</keyword>
<keyword id="KW-0426">Late protein</keyword>
<keyword id="KW-0472">Membrane</keyword>
<keyword id="KW-0675">Receptor</keyword>
<keyword id="KW-1185">Reference proteome</keyword>
<keyword id="KW-0677">Repeat</keyword>
<keyword id="KW-0732">Signal</keyword>
<keyword id="KW-0812">Transmembrane</keyword>
<keyword id="KW-1133">Transmembrane helix</keyword>
<keyword id="KW-0261">Viral envelope protein</keyword>
<keyword id="KW-0899">Viral immunoevasion</keyword>
<keyword id="KW-1162">Viral penetration into host cytoplasm</keyword>
<keyword id="KW-0946">Virion</keyword>
<keyword id="KW-1160">Virus entry into host cell</keyword>
<proteinExistence type="evidence at protein level"/>
<protein>
    <recommendedName>
        <fullName>CD2 homolog</fullName>
        <shortName>CD2H</shortName>
    </recommendedName>
    <alternativeName>
        <fullName>5HL</fullName>
    </alternativeName>
    <alternativeName>
        <fullName>CD2v</fullName>
    </alternativeName>
    <alternativeName>
        <fullName>T-lymphocyte CD2 receptor-like protein</fullName>
        <shortName>CD2-like protein</shortName>
    </alternativeName>
    <alternativeName>
        <fullName evidence="13">pEP402R</fullName>
    </alternativeName>
</protein>
<reference key="1">
    <citation type="journal article" date="1995" name="Virology">
        <title>Analysis of the complete nucleotide sequence of African swine fever virus.</title>
        <authorList>
            <person name="Yanez R.J."/>
            <person name="Rodriguez J.M."/>
            <person name="Nogal M.L."/>
            <person name="Yuste L."/>
            <person name="Enriquez C."/>
            <person name="Rodriguez J.F."/>
            <person name="Vinuela E."/>
        </authorList>
    </citation>
    <scope>NUCLEOTIDE SEQUENCE [LARGE SCALE GENOMIC DNA]</scope>
</reference>
<reference key="2">
    <citation type="journal article" date="1993" name="J. Virol.">
        <title>African swine fever virus encodes a CD2 homolog responsible for the adhesion of erythrocytes to infected cells.</title>
        <authorList>
            <person name="Rodriguez J.M."/>
            <person name="Yanez R.J."/>
            <person name="Almazan F."/>
            <person name="Vinuela E."/>
            <person name="Rodriguez J.F."/>
        </authorList>
    </citation>
    <scope>FUNCTION</scope>
</reference>
<reference key="3">
    <citation type="journal article" date="1996" name="Virology">
        <title>Functional and immunological properties of the baculovirus-expressed hemagglutinin of African swine fever virus.</title>
        <authorList>
            <person name="Ruiz-Gonzalvo F."/>
            <person name="Rodriguez F."/>
            <person name="Escribano J.M."/>
        </authorList>
    </citation>
    <scope>FUNCTION</scope>
</reference>
<reference key="4">
    <citation type="journal article" date="2009" name="Virology">
        <title>The CD2v protein enhances African swine fever virus replication in the tick vector, Ornithodoros erraticus.</title>
        <authorList>
            <person name="Rowlands R.J."/>
            <person name="Duarte M.M."/>
            <person name="Boinas F."/>
            <person name="Hutchings G."/>
            <person name="Dixon L.K."/>
        </authorList>
    </citation>
    <scope>FUNCTION</scope>
    <source>
        <strain>Isolate NH/P68</strain>
    </source>
</reference>
<reference key="5">
    <citation type="journal article" date="2015" name="PLoS ONE">
        <title>CD2v interacts with adaptor protein AP-1 during African swine fever infection.</title>
        <authorList>
            <person name="Perez-Nunez D."/>
            <person name="Garcia-Urdiales E."/>
            <person name="Martinez-Bonet M."/>
            <person name="Nogal M.L."/>
            <person name="Barroso S."/>
            <person name="Revilla Y."/>
            <person name="Madrid R."/>
        </authorList>
    </citation>
    <scope>INTERACTION WITH THE HOST AP-1 COMPLEX</scope>
    <scope>SUBCELLULAR LOCATION</scope>
    <scope>FUNCTION</scope>
    <source>
        <strain>Ba71V</strain>
        <strain>Isolate NH/P68</strain>
    </source>
</reference>
<reference key="6">
    <citation type="journal article" date="2017" name="J. Virol.">
        <title>BA71DeltaCD2: a New Recombinant Live Attenuated African Swine Fever Virus with Cross-Protective Capabilities.</title>
        <authorList>
            <person name="Monteagudo P.L."/>
            <person name="Lacasta A."/>
            <person name="Lopez E."/>
            <person name="Bosch L."/>
            <person name="Collado J."/>
            <person name="Pina-Pedrero S."/>
            <person name="Correa-Fiz F."/>
            <person name="Accensi F."/>
            <person name="Navas M.J."/>
            <person name="Vidal E."/>
            <person name="Bustos M.J."/>
            <person name="Rodriguez J.M."/>
            <person name="Gallei A."/>
            <person name="Nikolin V."/>
            <person name="Salas M.L."/>
            <person name="Rodriguez F."/>
        </authorList>
    </citation>
    <scope>DISRUPTION PHENOTYPE</scope>
</reference>
<reference key="7">
    <citation type="journal article" date="2018" name="J. Virol.">
        <title>A Proteomic Atlas of the African Swine Fever Virus Particle.</title>
        <authorList>
            <person name="Alejo A."/>
            <person name="Matamoros T."/>
            <person name="Guerra M."/>
            <person name="Andres G."/>
        </authorList>
    </citation>
    <scope>SUBCELLULAR LOCATION</scope>
</reference>
<reference key="8">
    <citation type="journal article" date="2020" name="J. Virol.">
        <title>The African Swine Fever Virus Transcriptome.</title>
        <authorList>
            <person name="Cackett G."/>
            <person name="Matelska D."/>
            <person name="Sykora M."/>
            <person name="Portugal R."/>
            <person name="Malecki M."/>
            <person name="Baehler J."/>
            <person name="Dixon L."/>
            <person name="Werner F."/>
        </authorList>
    </citation>
    <scope>INDUCTION</scope>
    <scope>ALTERNATIVE INITIATION</scope>
</reference>
<reference key="9">
    <citation type="journal article" date="2021" name="Drug Deliv.">
        <title>Identification of a new cell-penetrating peptide derived from the african swine fever virus CD2v protein.</title>
        <authorList>
            <person name="Yang S."/>
            <person name="Zhang X."/>
            <person name="Cao Y."/>
            <person name="Li S."/>
            <person name="Shao J."/>
            <person name="Sun S."/>
            <person name="Guo H."/>
            <person name="Yin S."/>
        </authorList>
    </citation>
    <scope>FUNCTION</scope>
    <scope>DOMAIN</scope>
</reference>
<evidence type="ECO:0000250" key="1">
    <source>
        <dbReference type="UniProtKB" id="P06729"/>
    </source>
</evidence>
<evidence type="ECO:0000250" key="2">
    <source>
        <dbReference type="UniProtKB" id="P0C9V9"/>
    </source>
</evidence>
<evidence type="ECO:0000255" key="3"/>
<evidence type="ECO:0000256" key="4">
    <source>
        <dbReference type="SAM" id="MobiDB-lite"/>
    </source>
</evidence>
<evidence type="ECO:0000269" key="5">
    <source>
    </source>
</evidence>
<evidence type="ECO:0000269" key="6">
    <source>
    </source>
</evidence>
<evidence type="ECO:0000269" key="7">
    <source>
    </source>
</evidence>
<evidence type="ECO:0000269" key="8">
    <source>
    </source>
</evidence>
<evidence type="ECO:0000269" key="9">
    <source>
    </source>
</evidence>
<evidence type="ECO:0000269" key="10">
    <source>
    </source>
</evidence>
<evidence type="ECO:0000269" key="11">
    <source>
    </source>
</evidence>
<evidence type="ECO:0000269" key="12">
    <source>
    </source>
</evidence>
<evidence type="ECO:0000303" key="13">
    <source>
    </source>
</evidence>
<evidence type="ECO:0000305" key="14"/>
<evidence type="ECO:0000305" key="15">
    <source>
    </source>
</evidence>
<gene>
    <name type="ordered locus">Ba71V-058</name>
    <name type="ORF">EP402R</name>
</gene>
<comment type="function">
    <text evidence="2 5 6 10 11 12">May play an immunosuppressive role by inhibiting lymphocyte proliferation and subsequently facilitating viral replication and generalization of infection (By similarity). Responsible for viral hemadsorption, which may help viral spread (PubMed:8102411, PubMed:8615037). Increases virus replication in the tick vector at the step of virus uptake or replication in the tick gut (PubMed:19729182). May play a role in the host Golgi reorganization to yield viral factories (PubMed:25915900). May play a role in host cell penetration (PubMed:34006158).</text>
</comment>
<comment type="subunit">
    <text evidence="6">Both glycosylated and nonglycosylated forms interact (via C-terminus) with the host AP-1 complex.</text>
</comment>
<comment type="subcellular location">
    <subcellularLocation>
        <location evidence="8">Host cell membrane</location>
        <topology evidence="14">Single-pass type I membrane protein</topology>
    </subcellularLocation>
    <subcellularLocation>
        <location evidence="15">Virion membrane</location>
    </subcellularLocation>
    <subcellularLocation>
        <location evidence="8">Host Golgi apparatus</location>
    </subcellularLocation>
    <text evidence="2 6 15">Localizes mainly around the perinuclear cytoplasmic viral factories which are probably derived from the host Golgi membrane (PubMed:25915900). Both proteolytic fragments localize to membrane compartements (By similarity). A minor fraction localizes on the host plasma membrane and on the outer viral envelope of budding particles (Probable).</text>
</comment>
<comment type="alternative products">
    <event type="alternative initiation"/>
    <isoform>
        <id>Q89501-1</id>
        <name>1</name>
        <sequence type="displayed"/>
    </isoform>
    <isoform>
        <id>Q89501-2</id>
        <name>2</name>
        <sequence type="described" ref="VSP_061340"/>
    </isoform>
</comment>
<comment type="induction">
    <text evidence="9">Expressed in the late phase of the viral replicative cycle.</text>
</comment>
<comment type="domain">
    <text evidence="10">The C-terminus contains repetitive amino-acids that may function as a cell-penetrating peptide.</text>
</comment>
<comment type="PTM">
    <text evidence="2">Cleaved into two fragments of 63 kDa and 26 kDa containing respectively the glycosylated N-terminus and the nonglycosylated C-terminus (By similarity). A full-length 89-kDa glycosylated form also exists (By similarity).</text>
</comment>
<comment type="disruption phenotype">
    <text evidence="7">Highly attenuates the virulence in vivo.</text>
</comment>
<comment type="similarity">
    <text evidence="14">Belongs to the asfivirus CD2 homolog protein family.</text>
</comment>
<sequence length="402" mass="45325">MIIIVIFLMCLKIVLNNIIIWSTLNQTVFLNNIFTINDTYGGLFWNTYYDNNRSNFTYCGIAGNYCSCCGHNISLYNTTNNCSLIIFPNNTEIFNRTYELVYLDKKINYTVKLLKSVDSPTITYNCTNSLITCKNNNGTNVNIYLIINNTIVNDTNGDILNYYWNGNNNFTATCMINNTISSLNETENINCTNPILKYQNYLSTLFYIIIFIVSGLIIGIFISIISVLSIRRKRKKHVEEIESPPPSESNEEDISHDDTTSIHEPSPREPLLPKPYSRYQYNTPIYYMRPSTQPLNPFPLPKPCPPPKPCPPPKPCPPPKPCPPPKPCSPPKPCRPPKPCPPPKPCPPPKPCPPPKPCPPSKPCPSPESYSPPKPLPSIPLLPNIPPLSTQNISLIHVDRII</sequence>
<accession>Q89501</accession>
<feature type="signal peptide" evidence="3">
    <location>
        <begin position="1"/>
        <end position="16"/>
    </location>
</feature>
<feature type="chain" id="PRO_0000379092" description="CD2 homolog">
    <location>
        <begin position="17"/>
        <end position="402"/>
    </location>
</feature>
<feature type="topological domain" description="Extracellular" evidence="3">
    <location>
        <begin position="17"/>
        <end position="204"/>
    </location>
</feature>
<feature type="transmembrane region" description="Helical" evidence="3">
    <location>
        <begin position="205"/>
        <end position="225"/>
    </location>
</feature>
<feature type="topological domain" description="Cytoplasmic" evidence="3">
    <location>
        <begin position="226"/>
        <end position="402"/>
    </location>
</feature>
<feature type="repeat" description="1">
    <location>
        <begin position="302"/>
        <end position="307"/>
    </location>
</feature>
<feature type="repeat" description="2">
    <location>
        <begin position="308"/>
        <end position="313"/>
    </location>
</feature>
<feature type="repeat" description="3">
    <location>
        <begin position="314"/>
        <end position="319"/>
    </location>
</feature>
<feature type="repeat" description="4">
    <location>
        <begin position="320"/>
        <end position="325"/>
    </location>
</feature>
<feature type="repeat" description="5">
    <location>
        <begin position="326"/>
        <end position="331"/>
    </location>
</feature>
<feature type="repeat" description="6">
    <location>
        <begin position="332"/>
        <end position="337"/>
    </location>
</feature>
<feature type="repeat" description="7">
    <location>
        <begin position="338"/>
        <end position="343"/>
    </location>
</feature>
<feature type="repeat" description="8">
    <location>
        <begin position="344"/>
        <end position="349"/>
    </location>
</feature>
<feature type="repeat" description="9">
    <location>
        <begin position="350"/>
        <end position="355"/>
    </location>
</feature>
<feature type="repeat" description="10">
    <location>
        <begin position="356"/>
        <end position="361"/>
    </location>
</feature>
<feature type="repeat" description="11">
    <location>
        <begin position="362"/>
        <end position="367"/>
    </location>
</feature>
<feature type="region of interest" description="Disordered" evidence="4">
    <location>
        <begin position="238"/>
        <end position="276"/>
    </location>
</feature>
<feature type="region of interest" description="11 X 6 AA tandem repeats of K-P-C-[PRS]-[P]-[PS]">
    <location>
        <begin position="302"/>
        <end position="367"/>
    </location>
</feature>
<feature type="region of interest" description="Disordered" evidence="4">
    <location>
        <begin position="319"/>
        <end position="388"/>
    </location>
</feature>
<feature type="compositionally biased region" description="Basic and acidic residues" evidence="4">
    <location>
        <begin position="256"/>
        <end position="267"/>
    </location>
</feature>
<feature type="compositionally biased region" description="Pro residues" evidence="4">
    <location>
        <begin position="319"/>
        <end position="386"/>
    </location>
</feature>
<feature type="glycosylation site" description="N-linked (GlcNAc...) asparagine; by host" evidence="3">
    <location>
        <position position="25"/>
    </location>
</feature>
<feature type="glycosylation site" description="N-linked (GlcNAc...) asparagine; by host" evidence="3">
    <location>
        <position position="37"/>
    </location>
</feature>
<feature type="glycosylation site" description="N-linked (GlcNAc...) asparagine; by host" evidence="3">
    <location>
        <position position="52"/>
    </location>
</feature>
<feature type="glycosylation site" description="N-linked (GlcNAc...) asparagine; by host" evidence="3">
    <location>
        <position position="55"/>
    </location>
</feature>
<feature type="glycosylation site" description="N-linked (GlcNAc...) asparagine; by host" evidence="3">
    <location>
        <position position="72"/>
    </location>
</feature>
<feature type="glycosylation site" description="N-linked (GlcNAc...) asparagine; by host" evidence="3">
    <location>
        <position position="77"/>
    </location>
</feature>
<feature type="glycosylation site" description="N-linked (GlcNAc...) asparagine; by host" evidence="3">
    <location>
        <position position="81"/>
    </location>
</feature>
<feature type="glycosylation site" description="N-linked (GlcNAc...) asparagine; by host" evidence="3">
    <location>
        <position position="89"/>
    </location>
</feature>
<feature type="glycosylation site" description="N-linked (GlcNAc...) asparagine; by host" evidence="3">
    <location>
        <position position="95"/>
    </location>
</feature>
<feature type="glycosylation site" description="N-linked (GlcNAc...) asparagine; by host" evidence="3">
    <location>
        <position position="108"/>
    </location>
</feature>
<feature type="glycosylation site" description="N-linked (GlcNAc...) asparagine; by host" evidence="3">
    <location>
        <position position="125"/>
    </location>
</feature>
<feature type="glycosylation site" description="N-linked (GlcNAc...) asparagine; by host" evidence="3">
    <location>
        <position position="137"/>
    </location>
</feature>
<feature type="glycosylation site" description="N-linked (GlcNAc...) asparagine; by host" evidence="3">
    <location>
        <position position="148"/>
    </location>
</feature>
<feature type="glycosylation site" description="N-linked (GlcNAc...) asparagine; by host" evidence="3">
    <location>
        <position position="153"/>
    </location>
</feature>
<feature type="glycosylation site" description="N-linked (GlcNAc...) asparagine; by host" evidence="3">
    <location>
        <position position="169"/>
    </location>
</feature>
<feature type="glycosylation site" description="N-linked (GlcNAc...) asparagine; by host" evidence="3">
    <location>
        <position position="177"/>
    </location>
</feature>
<feature type="glycosylation site" description="N-linked (GlcNAc...) asparagine; by host" evidence="3">
    <location>
        <position position="184"/>
    </location>
</feature>
<feature type="glycosylation site" description="N-linked (GlcNAc...) asparagine; by host" evidence="3">
    <location>
        <position position="190"/>
    </location>
</feature>
<feature type="disulfide bond" evidence="1">
    <location>
        <begin position="126"/>
        <end position="191"/>
    </location>
</feature>
<feature type="disulfide bond" evidence="1">
    <location>
        <begin position="133"/>
        <end position="174"/>
    </location>
</feature>
<feature type="splice variant" id="VSP_061340" description="In isoform 2." evidence="9">
    <location>
        <begin position="1"/>
        <end position="287"/>
    </location>
</feature>
<name>CD2H_ASFB7</name>
<organismHost>
    <name type="scientific">Ornithodoros</name>
    <name type="common">relapsing fever ticks</name>
    <dbReference type="NCBI Taxonomy" id="6937"/>
</organismHost>
<organismHost>
    <name type="scientific">Sus scrofa</name>
    <name type="common">Pig</name>
    <dbReference type="NCBI Taxonomy" id="9823"/>
</organismHost>
<organism>
    <name type="scientific">African swine fever virus (strain Badajoz 1971 Vero-adapted)</name>
    <name type="common">Ba71V</name>
    <name type="synonym">ASFV</name>
    <dbReference type="NCBI Taxonomy" id="10498"/>
    <lineage>
        <taxon>Viruses</taxon>
        <taxon>Varidnaviria</taxon>
        <taxon>Bamfordvirae</taxon>
        <taxon>Nucleocytoviricota</taxon>
        <taxon>Pokkesviricetes</taxon>
        <taxon>Asfuvirales</taxon>
        <taxon>Asfarviridae</taxon>
        <taxon>Asfivirus</taxon>
        <taxon>African swine fever virus</taxon>
    </lineage>
</organism>
<dbReference type="EMBL" id="U18466">
    <property type="protein sequence ID" value="AAA65288.1"/>
    <property type="molecule type" value="Genomic_DNA"/>
</dbReference>
<dbReference type="PIR" id="A40678">
    <property type="entry name" value="A40678"/>
</dbReference>
<dbReference type="RefSeq" id="NP_042752.1">
    <property type="nucleotide sequence ID" value="NC_001659.2"/>
</dbReference>
<dbReference type="SMR" id="Q89501"/>
<dbReference type="DNASU" id="1488823"/>
<dbReference type="GeneID" id="22220440"/>
<dbReference type="KEGG" id="vg:22220440"/>
<dbReference type="Proteomes" id="UP000000624">
    <property type="component" value="Segment"/>
</dbReference>
<dbReference type="GO" id="GO:0044177">
    <property type="term" value="C:host cell Golgi apparatus"/>
    <property type="evidence" value="ECO:0007669"/>
    <property type="project" value="UniProtKB-SubCell"/>
</dbReference>
<dbReference type="GO" id="GO:0020002">
    <property type="term" value="C:host cell plasma membrane"/>
    <property type="evidence" value="ECO:0007669"/>
    <property type="project" value="UniProtKB-SubCell"/>
</dbReference>
<dbReference type="GO" id="GO:0016020">
    <property type="term" value="C:membrane"/>
    <property type="evidence" value="ECO:0007669"/>
    <property type="project" value="UniProtKB-KW"/>
</dbReference>
<dbReference type="GO" id="GO:0019031">
    <property type="term" value="C:viral envelope"/>
    <property type="evidence" value="ECO:0007669"/>
    <property type="project" value="UniProtKB-KW"/>
</dbReference>
<dbReference type="GO" id="GO:0055036">
    <property type="term" value="C:virion membrane"/>
    <property type="evidence" value="ECO:0007669"/>
    <property type="project" value="UniProtKB-SubCell"/>
</dbReference>
<dbReference type="GO" id="GO:0046718">
    <property type="term" value="P:symbiont entry into host cell"/>
    <property type="evidence" value="ECO:0007669"/>
    <property type="project" value="UniProtKB-KW"/>
</dbReference>
<dbReference type="GO" id="GO:0039504">
    <property type="term" value="P:symbiont-mediated suppression of host adaptive immune response"/>
    <property type="evidence" value="ECO:0007669"/>
    <property type="project" value="UniProtKB-KW"/>
</dbReference>
<dbReference type="Gene3D" id="2.60.40.10">
    <property type="entry name" value="Immunoglobulins"/>
    <property type="match status" value="1"/>
</dbReference>
<dbReference type="Gene3D" id="2.160.20.50">
    <property type="entry name" value="Insect antifreeze protein"/>
    <property type="match status" value="1"/>
</dbReference>
<dbReference type="InterPro" id="IPR036179">
    <property type="entry name" value="Ig-like_dom_sf"/>
</dbReference>
<dbReference type="InterPro" id="IPR013783">
    <property type="entry name" value="Ig-like_fold"/>
</dbReference>
<dbReference type="PRINTS" id="PR01217">
    <property type="entry name" value="PRICHEXTENSN"/>
</dbReference>
<dbReference type="SUPFAM" id="SSF48726">
    <property type="entry name" value="Immunoglobulin"/>
    <property type="match status" value="1"/>
</dbReference>